<reference key="1">
    <citation type="submission" date="1995-10" db="EMBL/GenBank/DDBJ databases">
        <title>DNA sequences of the frd region in T4-related bacteriophages.</title>
        <authorList>
            <person name="Poglazov A.B."/>
            <person name="Porter D."/>
            <person name="Kutter E.M."/>
            <person name="Mesyanzhinov V.V."/>
        </authorList>
    </citation>
    <scope>NUCLEOTIDE SEQUENCE [GENOMIC DNA]</scope>
</reference>
<organism>
    <name type="scientific">Enterobacteria phage LZ1</name>
    <name type="common">Bacteriophage LZ1</name>
    <dbReference type="NCBI Taxonomy" id="42175"/>
    <lineage>
        <taxon>Viruses</taxon>
        <taxon>Duplodnaviria</taxon>
        <taxon>Heunggongvirae</taxon>
        <taxon>Uroviricota</taxon>
        <taxon>Caudoviricetes</taxon>
        <taxon>Straboviridae</taxon>
        <taxon>Tevenvirinae</taxon>
        <taxon>Tequatrovirus</taxon>
    </lineage>
</organism>
<organismHost>
    <name type="scientific">Escherichia coli</name>
    <dbReference type="NCBI Taxonomy" id="562"/>
</organismHost>
<gene>
    <name type="primary">frd.3</name>
    <name type="synonym">frd3</name>
</gene>
<feature type="chain" id="PRO_0000165195" description="Uncharacterized 8.8 kDa protein in frd-Gp32 intergenic region">
    <location>
        <begin position="1"/>
        <end position="75"/>
    </location>
</feature>
<sequence length="75" mass="8806">MAKVDIDIVDFEYIEEIIRNRYPELSITSVQDSKFWSIQIVVEGPLEDLTRFMANEYCDGMDSEDAEFYMGLIEQ</sequence>
<dbReference type="EMBL" id="L46834">
    <property type="protein sequence ID" value="AAA74673.1"/>
    <property type="molecule type" value="Genomic_DNA"/>
</dbReference>
<dbReference type="InterPro" id="IPR008765">
    <property type="entry name" value="Phage_T4_Frd3"/>
</dbReference>
<dbReference type="Pfam" id="PF05798">
    <property type="entry name" value="Phage_FRD3"/>
    <property type="match status" value="1"/>
</dbReference>
<accession>Q76VH2</accession>
<protein>
    <recommendedName>
        <fullName>Uncharacterized 8.8 kDa protein in frd-Gp32 intergenic region</fullName>
    </recommendedName>
</protein>
<name>Y14E_BPLZ1</name>
<proteinExistence type="predicted"/>